<keyword id="KW-0119">Carbohydrate metabolism</keyword>
<keyword id="KW-0325">Glycoprotein</keyword>
<keyword id="KW-0326">Glycosidase</keyword>
<keyword id="KW-0378">Hydrolase</keyword>
<keyword id="KW-0624">Polysaccharide degradation</keyword>
<keyword id="KW-1185">Reference proteome</keyword>
<keyword id="KW-0964">Secreted</keyword>
<keyword id="KW-0732">Signal</keyword>
<keyword id="KW-0858">Xylan degradation</keyword>
<protein>
    <recommendedName>
        <fullName>Probable exo-1,4-beta-xylosidase xlnD</fullName>
        <ecNumber>3.2.1.37</ecNumber>
    </recommendedName>
    <alternativeName>
        <fullName>1,4-beta-D-xylan xylohydrolase xlnD</fullName>
    </alternativeName>
    <alternativeName>
        <fullName>Beta-xylosidase A</fullName>
    </alternativeName>
    <alternativeName>
        <fullName>Beta-xylosidase xlnD</fullName>
    </alternativeName>
    <alternativeName>
        <fullName>Xylobiase xlnD</fullName>
    </alternativeName>
</protein>
<accession>A1CND4</accession>
<organism>
    <name type="scientific">Aspergillus clavatus (strain ATCC 1007 / CBS 513.65 / DSM 816 / NCTC 3887 / NRRL 1 / QM 1276 / 107)</name>
    <dbReference type="NCBI Taxonomy" id="344612"/>
    <lineage>
        <taxon>Eukaryota</taxon>
        <taxon>Fungi</taxon>
        <taxon>Dikarya</taxon>
        <taxon>Ascomycota</taxon>
        <taxon>Pezizomycotina</taxon>
        <taxon>Eurotiomycetes</taxon>
        <taxon>Eurotiomycetidae</taxon>
        <taxon>Eurotiales</taxon>
        <taxon>Aspergillaceae</taxon>
        <taxon>Aspergillus</taxon>
        <taxon>Aspergillus subgen. Fumigati</taxon>
    </lineage>
</organism>
<evidence type="ECO:0000250" key="1"/>
<evidence type="ECO:0000255" key="2"/>
<evidence type="ECO:0000305" key="3"/>
<reference key="1">
    <citation type="journal article" date="2008" name="PLoS Genet.">
        <title>Genomic islands in the pathogenic filamentous fungus Aspergillus fumigatus.</title>
        <authorList>
            <person name="Fedorova N.D."/>
            <person name="Khaldi N."/>
            <person name="Joardar V.S."/>
            <person name="Maiti R."/>
            <person name="Amedeo P."/>
            <person name="Anderson M.J."/>
            <person name="Crabtree J."/>
            <person name="Silva J.C."/>
            <person name="Badger J.H."/>
            <person name="Albarraq A."/>
            <person name="Angiuoli S."/>
            <person name="Bussey H."/>
            <person name="Bowyer P."/>
            <person name="Cotty P.J."/>
            <person name="Dyer P.S."/>
            <person name="Egan A."/>
            <person name="Galens K."/>
            <person name="Fraser-Liggett C.M."/>
            <person name="Haas B.J."/>
            <person name="Inman J.M."/>
            <person name="Kent R."/>
            <person name="Lemieux S."/>
            <person name="Malavazi I."/>
            <person name="Orvis J."/>
            <person name="Roemer T."/>
            <person name="Ronning C.M."/>
            <person name="Sundaram J.P."/>
            <person name="Sutton G."/>
            <person name="Turner G."/>
            <person name="Venter J.C."/>
            <person name="White O.R."/>
            <person name="Whitty B.R."/>
            <person name="Youngman P."/>
            <person name="Wolfe K.H."/>
            <person name="Goldman G.H."/>
            <person name="Wortman J.R."/>
            <person name="Jiang B."/>
            <person name="Denning D.W."/>
            <person name="Nierman W.C."/>
        </authorList>
    </citation>
    <scope>NUCLEOTIDE SEQUENCE [LARGE SCALE GENOMIC DNA]</scope>
    <source>
        <strain>ATCC 1007 / CBS 513.65 / DSM 816 / NCTC 3887 / NRRL 1 / QM 1276 / 107</strain>
    </source>
</reference>
<proteinExistence type="inferred from homology"/>
<feature type="signal peptide" evidence="2">
    <location>
        <begin position="1"/>
        <end position="20"/>
    </location>
</feature>
<feature type="chain" id="PRO_0000393285" description="Probable exo-1,4-beta-xylosidase xlnD">
    <location>
        <begin position="21"/>
        <end position="792"/>
    </location>
</feature>
<feature type="active site" evidence="1">
    <location>
        <position position="310"/>
    </location>
</feature>
<feature type="glycosylation site" description="N-linked (GlcNAc...) asparagine" evidence="2">
    <location>
        <position position="23"/>
    </location>
</feature>
<feature type="glycosylation site" description="N-linked (GlcNAc...) asparagine" evidence="2">
    <location>
        <position position="87"/>
    </location>
</feature>
<feature type="glycosylation site" description="N-linked (GlcNAc...) asparagine" evidence="2">
    <location>
        <position position="142"/>
    </location>
</feature>
<feature type="glycosylation site" description="N-linked (GlcNAc...) asparagine" evidence="2">
    <location>
        <position position="246"/>
    </location>
</feature>
<feature type="glycosylation site" description="N-linked (GlcNAc...) asparagine" evidence="2">
    <location>
        <position position="326"/>
    </location>
</feature>
<feature type="glycosylation site" description="N-linked (GlcNAc...) asparagine" evidence="2">
    <location>
        <position position="385"/>
    </location>
</feature>
<feature type="glycosylation site" description="N-linked (GlcNAc...) asparagine" evidence="2">
    <location>
        <position position="391"/>
    </location>
</feature>
<feature type="glycosylation site" description="N-linked (GlcNAc...) asparagine" evidence="2">
    <location>
        <position position="404"/>
    </location>
</feature>
<feature type="glycosylation site" description="N-linked (GlcNAc...) asparagine" evidence="2">
    <location>
        <position position="438"/>
    </location>
</feature>
<feature type="glycosylation site" description="N-linked (GlcNAc...) asparagine" evidence="2">
    <location>
        <position position="475"/>
    </location>
</feature>
<feature type="glycosylation site" description="N-linked (GlcNAc...) asparagine" evidence="2">
    <location>
        <position position="479"/>
    </location>
</feature>
<feature type="glycosylation site" description="N-linked (GlcNAc...) asparagine" evidence="2">
    <location>
        <position position="516"/>
    </location>
</feature>
<feature type="glycosylation site" description="N-linked (GlcNAc...) asparagine" evidence="2">
    <location>
        <position position="677"/>
    </location>
</feature>
<feature type="glycosylation site" description="N-linked (GlcNAc...) asparagine" evidence="2">
    <location>
        <position position="699"/>
    </location>
</feature>
<gene>
    <name type="primary">xlnD</name>
    <name type="synonym">xylA</name>
    <name type="ORF">ACLA_018590</name>
</gene>
<sequence>MSAIKSIATVLAAILPSVLAQANTSYADYNTEANPDLTPQSVATIDLSFPDCDNGPLSKTIVCDTLTSPYDRAAALISLFTLEELVNATGNTSPGVPRLGLPPYQVWNEALHGLDRAYFTDEGQFSWSTSFPMPILTMSALNRTLINQVASIISTQGRAFSNAGRYGLDVYSPNINSFRHPVWGRGQETPGEDAYCLSSAYAYEYITGIQGGVDPKSLKLVATAKHYAGYDIENWDGHSRLGNDMNITQQDLSEYYTPQFLVAARDAKVRSVMCSYNAVNGVPSCANSFFLQTLLRDTFGFVEDGYISSDCDSAYNVFNPHEYAANVSSAAADSIRAGTDIDCGTTYQYYFDEAVDQNLLSRADIERGVIRLYSNLMRLGYFDGNSSAYRNLTWNDVVTTNSWNISYEVEGTVLLKNDGTLPLSESIRSIALVGPWMNVSTQLQGNYFGPAPYLISPLDAFRDSHLDVNYAFGTNISSNSTDGFSKALSAAKKSDAIIFAGGIDNSLEAETLDRMNITWPGKQLELIDQLSQLGKPLIVLQMGGGQVDSSLLKSNKNVNSLIWGGYPGQSGGQALLDIITGKRAPAGRLVVTQYPAEYATQFPATDMSLRPHGNNPGQTYMWYTGTPVYEFGHGLFYTTFRVSHARAVKIKPTYNIQDLLAQPHPGYIHVEQMPFLNFTVDITNTGKASSDYTAMLFANTTAGPAPYPKKWLVGFDRLPTLGPSTSKLMTIPVTINSMARTDELGNRVLYPGKYELALNNERSVVLPLSLTGKPAVLSKWPLEEQLIPLAKS</sequence>
<name>XYND_ASPCL</name>
<dbReference type="EC" id="3.2.1.37"/>
<dbReference type="EMBL" id="DS027059">
    <property type="protein sequence ID" value="EAW07155.1"/>
    <property type="status" value="ALT_FRAME"/>
    <property type="molecule type" value="Genomic_DNA"/>
</dbReference>
<dbReference type="RefSeq" id="XP_001268581.1">
    <property type="nucleotide sequence ID" value="XM_001268580.1"/>
</dbReference>
<dbReference type="SMR" id="A1CND4"/>
<dbReference type="STRING" id="344612.A1CND4"/>
<dbReference type="GlyCosmos" id="A1CND4">
    <property type="glycosylation" value="14 sites, No reported glycans"/>
</dbReference>
<dbReference type="GeneID" id="4700921"/>
<dbReference type="KEGG" id="act:ACLA_018590"/>
<dbReference type="eggNOG" id="ENOG502QQ55">
    <property type="taxonomic scope" value="Eukaryota"/>
</dbReference>
<dbReference type="OrthoDB" id="47059at2759"/>
<dbReference type="UniPathway" id="UPA00114"/>
<dbReference type="Proteomes" id="UP000006701">
    <property type="component" value="Unassembled WGS sequence"/>
</dbReference>
<dbReference type="GO" id="GO:0005576">
    <property type="term" value="C:extracellular region"/>
    <property type="evidence" value="ECO:0007669"/>
    <property type="project" value="UniProtKB-SubCell"/>
</dbReference>
<dbReference type="GO" id="GO:0046556">
    <property type="term" value="F:alpha-L-arabinofuranosidase activity"/>
    <property type="evidence" value="ECO:0007669"/>
    <property type="project" value="TreeGrafter"/>
</dbReference>
<dbReference type="GO" id="GO:0009044">
    <property type="term" value="F:xylan 1,4-beta-xylosidase activity"/>
    <property type="evidence" value="ECO:0007669"/>
    <property type="project" value="UniProtKB-EC"/>
</dbReference>
<dbReference type="GO" id="GO:0031222">
    <property type="term" value="P:arabinan catabolic process"/>
    <property type="evidence" value="ECO:0007669"/>
    <property type="project" value="TreeGrafter"/>
</dbReference>
<dbReference type="GO" id="GO:0045493">
    <property type="term" value="P:xylan catabolic process"/>
    <property type="evidence" value="ECO:0007669"/>
    <property type="project" value="UniProtKB-UniPathway"/>
</dbReference>
<dbReference type="FunFam" id="2.60.40.10:FF:001420">
    <property type="entry name" value="Exo-1,4-beta-xylosidase xlnD"/>
    <property type="match status" value="1"/>
</dbReference>
<dbReference type="FunFam" id="3.20.20.300:FF:000009">
    <property type="entry name" value="Exo-1,4-beta-xylosidase xlnD"/>
    <property type="match status" value="1"/>
</dbReference>
<dbReference type="FunFam" id="3.40.50.1700:FF:000007">
    <property type="entry name" value="Exo-1,4-beta-xylosidase xlnD"/>
    <property type="match status" value="1"/>
</dbReference>
<dbReference type="Gene3D" id="3.40.50.1700">
    <property type="entry name" value="Glycoside hydrolase family 3 C-terminal domain"/>
    <property type="match status" value="1"/>
</dbReference>
<dbReference type="Gene3D" id="3.20.20.300">
    <property type="entry name" value="Glycoside hydrolase, family 3, N-terminal domain"/>
    <property type="match status" value="1"/>
</dbReference>
<dbReference type="Gene3D" id="2.60.40.10">
    <property type="entry name" value="Immunoglobulins"/>
    <property type="match status" value="1"/>
</dbReference>
<dbReference type="InterPro" id="IPR044993">
    <property type="entry name" value="BXL"/>
</dbReference>
<dbReference type="InterPro" id="IPR026891">
    <property type="entry name" value="Fn3-like"/>
</dbReference>
<dbReference type="InterPro" id="IPR002772">
    <property type="entry name" value="Glyco_hydro_3_C"/>
</dbReference>
<dbReference type="InterPro" id="IPR036881">
    <property type="entry name" value="Glyco_hydro_3_C_sf"/>
</dbReference>
<dbReference type="InterPro" id="IPR001764">
    <property type="entry name" value="Glyco_hydro_3_N"/>
</dbReference>
<dbReference type="InterPro" id="IPR036962">
    <property type="entry name" value="Glyco_hydro_3_N_sf"/>
</dbReference>
<dbReference type="InterPro" id="IPR017853">
    <property type="entry name" value="Glycoside_hydrolase_SF"/>
</dbReference>
<dbReference type="InterPro" id="IPR013783">
    <property type="entry name" value="Ig-like_fold"/>
</dbReference>
<dbReference type="PANTHER" id="PTHR42721:SF13">
    <property type="entry name" value="EXO-1,4-BETA-XYLOSIDASE XLND"/>
    <property type="match status" value="1"/>
</dbReference>
<dbReference type="PANTHER" id="PTHR42721">
    <property type="entry name" value="SUGAR HYDROLASE-RELATED"/>
    <property type="match status" value="1"/>
</dbReference>
<dbReference type="Pfam" id="PF14310">
    <property type="entry name" value="Fn3-like"/>
    <property type="match status" value="1"/>
</dbReference>
<dbReference type="Pfam" id="PF00933">
    <property type="entry name" value="Glyco_hydro_3"/>
    <property type="match status" value="1"/>
</dbReference>
<dbReference type="Pfam" id="PF01915">
    <property type="entry name" value="Glyco_hydro_3_C"/>
    <property type="match status" value="1"/>
</dbReference>
<dbReference type="SMART" id="SM01217">
    <property type="entry name" value="Fn3_like"/>
    <property type="match status" value="1"/>
</dbReference>
<dbReference type="SUPFAM" id="SSF51445">
    <property type="entry name" value="(Trans)glycosidases"/>
    <property type="match status" value="1"/>
</dbReference>
<dbReference type="SUPFAM" id="SSF52279">
    <property type="entry name" value="Beta-D-glucan exohydrolase, C-terminal domain"/>
    <property type="match status" value="1"/>
</dbReference>
<comment type="function">
    <text evidence="1">Xylan 1,4-beta-xylosidase involved in the hydrolysis of xylan, a major structural heterogeneous polysaccharide found in plant biomass representing the second most abundant polysaccharide in the biosphere, after cellulose.</text>
</comment>
<comment type="catalytic activity">
    <reaction>
        <text>Hydrolysis of (1-&gt;4)-beta-D-xylans, to remove successive D-xylose residues from the non-reducing termini.</text>
        <dbReference type="EC" id="3.2.1.37"/>
    </reaction>
</comment>
<comment type="pathway">
    <text>Glycan degradation; xylan degradation.</text>
</comment>
<comment type="subcellular location">
    <subcellularLocation>
        <location evidence="1">Secreted</location>
    </subcellularLocation>
</comment>
<comment type="similarity">
    <text evidence="3">Belongs to the glycosyl hydrolase 3 family.</text>
</comment>
<comment type="sequence caution" evidence="3">
    <conflict type="frameshift">
        <sequence resource="EMBL-CDS" id="EAW07155"/>
    </conflict>
</comment>